<dbReference type="EMBL" id="BX571859">
    <property type="protein sequence ID" value="CAE12340.1"/>
    <property type="molecule type" value="Genomic_DNA"/>
</dbReference>
<dbReference type="RefSeq" id="WP_000429386.1">
    <property type="nucleotide sequence ID" value="NC_005126.1"/>
</dbReference>
<dbReference type="SMR" id="P68702"/>
<dbReference type="STRING" id="243265.plu0045"/>
<dbReference type="GeneID" id="98390858"/>
<dbReference type="KEGG" id="plu:plu0045"/>
<dbReference type="eggNOG" id="ENOG5032S3K">
    <property type="taxonomic scope" value="Bacteria"/>
</dbReference>
<dbReference type="HOGENOM" id="CLU_148047_1_0_6"/>
<dbReference type="OrthoDB" id="9811659at2"/>
<dbReference type="Proteomes" id="UP000002514">
    <property type="component" value="Chromosome"/>
</dbReference>
<dbReference type="GO" id="GO:0005886">
    <property type="term" value="C:plasma membrane"/>
    <property type="evidence" value="ECO:0007669"/>
    <property type="project" value="UniProtKB-SubCell"/>
</dbReference>
<dbReference type="GO" id="GO:0045259">
    <property type="term" value="C:proton-transporting ATP synthase complex"/>
    <property type="evidence" value="ECO:0007669"/>
    <property type="project" value="UniProtKB-KW"/>
</dbReference>
<dbReference type="GO" id="GO:0033177">
    <property type="term" value="C:proton-transporting two-sector ATPase complex, proton-transporting domain"/>
    <property type="evidence" value="ECO:0007669"/>
    <property type="project" value="InterPro"/>
</dbReference>
<dbReference type="GO" id="GO:0008289">
    <property type="term" value="F:lipid binding"/>
    <property type="evidence" value="ECO:0007669"/>
    <property type="project" value="UniProtKB-KW"/>
</dbReference>
<dbReference type="GO" id="GO:0046933">
    <property type="term" value="F:proton-transporting ATP synthase activity, rotational mechanism"/>
    <property type="evidence" value="ECO:0007669"/>
    <property type="project" value="UniProtKB-UniRule"/>
</dbReference>
<dbReference type="CDD" id="cd18185">
    <property type="entry name" value="ATP-synt_Fo_c_ATPE"/>
    <property type="match status" value="1"/>
</dbReference>
<dbReference type="FunFam" id="1.20.20.10:FF:000002">
    <property type="entry name" value="ATP synthase subunit c"/>
    <property type="match status" value="1"/>
</dbReference>
<dbReference type="Gene3D" id="1.20.20.10">
    <property type="entry name" value="F1F0 ATP synthase subunit C"/>
    <property type="match status" value="1"/>
</dbReference>
<dbReference type="HAMAP" id="MF_01396">
    <property type="entry name" value="ATP_synth_c_bact"/>
    <property type="match status" value="1"/>
</dbReference>
<dbReference type="InterPro" id="IPR005953">
    <property type="entry name" value="ATP_synth_csu_bac/chlpt"/>
</dbReference>
<dbReference type="InterPro" id="IPR000454">
    <property type="entry name" value="ATP_synth_F0_csu"/>
</dbReference>
<dbReference type="InterPro" id="IPR020537">
    <property type="entry name" value="ATP_synth_F0_csu_DDCD_BS"/>
</dbReference>
<dbReference type="InterPro" id="IPR038662">
    <property type="entry name" value="ATP_synth_F0_csu_sf"/>
</dbReference>
<dbReference type="InterPro" id="IPR002379">
    <property type="entry name" value="ATPase_proteolipid_c-like_dom"/>
</dbReference>
<dbReference type="InterPro" id="IPR035921">
    <property type="entry name" value="F/V-ATP_Csub_sf"/>
</dbReference>
<dbReference type="NCBIfam" id="TIGR01260">
    <property type="entry name" value="ATP_synt_c"/>
    <property type="match status" value="1"/>
</dbReference>
<dbReference type="NCBIfam" id="NF005363">
    <property type="entry name" value="PRK06876.1"/>
    <property type="match status" value="1"/>
</dbReference>
<dbReference type="Pfam" id="PF00137">
    <property type="entry name" value="ATP-synt_C"/>
    <property type="match status" value="1"/>
</dbReference>
<dbReference type="PRINTS" id="PR00124">
    <property type="entry name" value="ATPASEC"/>
</dbReference>
<dbReference type="SUPFAM" id="SSF81333">
    <property type="entry name" value="F1F0 ATP synthase subunit C"/>
    <property type="match status" value="1"/>
</dbReference>
<dbReference type="PROSITE" id="PS00605">
    <property type="entry name" value="ATPASE_C"/>
    <property type="match status" value="1"/>
</dbReference>
<proteinExistence type="inferred from homology"/>
<organism>
    <name type="scientific">Photorhabdus laumondii subsp. laumondii (strain DSM 15139 / CIP 105565 / TT01)</name>
    <name type="common">Photorhabdus luminescens subsp. laumondii</name>
    <dbReference type="NCBI Taxonomy" id="243265"/>
    <lineage>
        <taxon>Bacteria</taxon>
        <taxon>Pseudomonadati</taxon>
        <taxon>Pseudomonadota</taxon>
        <taxon>Gammaproteobacteria</taxon>
        <taxon>Enterobacterales</taxon>
        <taxon>Morganellaceae</taxon>
        <taxon>Photorhabdus</taxon>
    </lineage>
</organism>
<comment type="function">
    <text evidence="2">F(1)F(0) ATP synthase produces ATP from ADP in the presence of a proton or sodium gradient. F-type ATPases consist of two structural domains, F(1) containing the extramembraneous catalytic core and F(0) containing the membrane proton channel, linked together by a central stalk and a peripheral stalk. During catalysis, ATP synthesis in the catalytic domain of F(1) is coupled via a rotary mechanism of the central stalk subunits to proton translocation.</text>
</comment>
<comment type="function">
    <text evidence="2">Key component of the F(0) channel; it plays a direct role in translocation across the membrane. A homomeric c-ring of between 10-14 subunits forms the central stalk rotor element with the F(1) delta and epsilon subunits.</text>
</comment>
<comment type="subunit">
    <text evidence="2">F-type ATPases have 2 components, F(1) - the catalytic core - and F(0) - the membrane proton channel. F(1) has five subunits: alpha(3), beta(3), gamma(1), delta(1), epsilon(1). F(0) has three main subunits: a(1), b(2) and c(10-14). The alpha and beta chains form an alternating ring which encloses part of the gamma chain. F(1) is attached to F(0) by a central stalk formed by the gamma and epsilon chains, while a peripheral stalk is formed by the delta and b chains.</text>
</comment>
<comment type="subcellular location">
    <subcellularLocation>
        <location evidence="2">Cell inner membrane</location>
        <topology evidence="2">Multi-pass membrane protein</topology>
    </subcellularLocation>
</comment>
<comment type="miscellaneous">
    <text evidence="1">Dicyclohexylcarbodiimide (DCDD) binding to the active aspartate residue inhibits ATPase in vitro.</text>
</comment>
<comment type="similarity">
    <text evidence="2">Belongs to the ATPase C chain family.</text>
</comment>
<accession>P68702</accession>
<accession>P00844</accession>
<name>ATPL_PHOLL</name>
<sequence>MENLNMDLLYMAAAVMMGLAAIGAAIGIGILGGKFLEGAARQPDLIPLLRTQFFIVMGLVDAIPMIAVGLGLYVMFAVA</sequence>
<evidence type="ECO:0000250" key="1"/>
<evidence type="ECO:0000255" key="2">
    <source>
        <dbReference type="HAMAP-Rule" id="MF_01396"/>
    </source>
</evidence>
<reference key="1">
    <citation type="journal article" date="2003" name="Nat. Biotechnol.">
        <title>The genome sequence of the entomopathogenic bacterium Photorhabdus luminescens.</title>
        <authorList>
            <person name="Duchaud E."/>
            <person name="Rusniok C."/>
            <person name="Frangeul L."/>
            <person name="Buchrieser C."/>
            <person name="Givaudan A."/>
            <person name="Taourit S."/>
            <person name="Bocs S."/>
            <person name="Boursaux-Eude C."/>
            <person name="Chandler M."/>
            <person name="Charles J.-F."/>
            <person name="Dassa E."/>
            <person name="Derose R."/>
            <person name="Derzelle S."/>
            <person name="Freyssinet G."/>
            <person name="Gaudriault S."/>
            <person name="Medigue C."/>
            <person name="Lanois A."/>
            <person name="Powell K."/>
            <person name="Siguier P."/>
            <person name="Vincent R."/>
            <person name="Wingate V."/>
            <person name="Zouine M."/>
            <person name="Glaser P."/>
            <person name="Boemare N."/>
            <person name="Danchin A."/>
            <person name="Kunst F."/>
        </authorList>
    </citation>
    <scope>NUCLEOTIDE SEQUENCE [LARGE SCALE GENOMIC DNA]</scope>
    <source>
        <strain>DSM 15139 / CIP 105565 / TT01</strain>
    </source>
</reference>
<gene>
    <name evidence="2" type="primary">atpE</name>
    <name type="ordered locus">plu0045</name>
</gene>
<keyword id="KW-0066">ATP synthesis</keyword>
<keyword id="KW-0997">Cell inner membrane</keyword>
<keyword id="KW-1003">Cell membrane</keyword>
<keyword id="KW-0138">CF(0)</keyword>
<keyword id="KW-0291">Formylation</keyword>
<keyword id="KW-0375">Hydrogen ion transport</keyword>
<keyword id="KW-0406">Ion transport</keyword>
<keyword id="KW-0446">Lipid-binding</keyword>
<keyword id="KW-0472">Membrane</keyword>
<keyword id="KW-1185">Reference proteome</keyword>
<keyword id="KW-0812">Transmembrane</keyword>
<keyword id="KW-1133">Transmembrane helix</keyword>
<keyword id="KW-0813">Transport</keyword>
<feature type="chain" id="PRO_0000112157" description="ATP synthase subunit c">
    <location>
        <begin position="1"/>
        <end position="79"/>
    </location>
</feature>
<feature type="transmembrane region" description="Helical" evidence="2">
    <location>
        <begin position="11"/>
        <end position="31"/>
    </location>
</feature>
<feature type="transmembrane region" description="Helical" evidence="2">
    <location>
        <begin position="53"/>
        <end position="73"/>
    </location>
</feature>
<feature type="site" description="Reversibly protonated during proton transport" evidence="2">
    <location>
        <position position="61"/>
    </location>
</feature>
<feature type="modified residue" description="N-formylmethionine" evidence="1">
    <location>
        <position position="1"/>
    </location>
</feature>
<protein>
    <recommendedName>
        <fullName evidence="2">ATP synthase subunit c</fullName>
    </recommendedName>
    <alternativeName>
        <fullName evidence="2">ATP synthase F(0) sector subunit c</fullName>
    </alternativeName>
    <alternativeName>
        <fullName evidence="2">F-type ATPase subunit c</fullName>
        <shortName evidence="2">F-ATPase subunit c</shortName>
    </alternativeName>
    <alternativeName>
        <fullName evidence="2">Lipid-binding protein</fullName>
    </alternativeName>
</protein>